<keyword id="KW-0934">Plastid</keyword>
<keyword id="KW-0687">Ribonucleoprotein</keyword>
<keyword id="KW-0689">Ribosomal protein</keyword>
<reference key="1">
    <citation type="journal article" date="2008" name="Mol. Biol. Evol.">
        <title>Functional gene losses occur with minimal size reduction in the plastid genome of the parasitic liverwort Aneura mirabilis.</title>
        <authorList>
            <person name="Wickett N.J."/>
            <person name="Zhang Y."/>
            <person name="Hansen S.K."/>
            <person name="Roper J.M."/>
            <person name="Kuehl J.V."/>
            <person name="Plock S.A."/>
            <person name="Wolf P.G."/>
            <person name="dePamphilis C.W."/>
            <person name="Boore J.L."/>
            <person name="Goffinet B."/>
        </authorList>
    </citation>
    <scope>NUCLEOTIDE SEQUENCE [LARGE SCALE GENOMIC DNA]</scope>
</reference>
<proteinExistence type="inferred from homology"/>
<evidence type="ECO:0000255" key="1">
    <source>
        <dbReference type="HAMAP-Rule" id="MF_00251"/>
    </source>
</evidence>
<evidence type="ECO:0000305" key="2"/>
<geneLocation type="non-photosynthetic plastid"/>
<dbReference type="EMBL" id="EU043314">
    <property type="protein sequence ID" value="ABS54507.1"/>
    <property type="molecule type" value="Genomic_DNA"/>
</dbReference>
<dbReference type="RefSeq" id="YP_001687245.1">
    <property type="nucleotide sequence ID" value="NC_010359.1"/>
</dbReference>
<dbReference type="SMR" id="B0YPQ9"/>
<dbReference type="GeneID" id="5952193"/>
<dbReference type="GO" id="GO:0009536">
    <property type="term" value="C:plastid"/>
    <property type="evidence" value="ECO:0007669"/>
    <property type="project" value="UniProtKB-SubCell"/>
</dbReference>
<dbReference type="GO" id="GO:1990904">
    <property type="term" value="C:ribonucleoprotein complex"/>
    <property type="evidence" value="ECO:0007669"/>
    <property type="project" value="UniProtKB-KW"/>
</dbReference>
<dbReference type="GO" id="GO:0005840">
    <property type="term" value="C:ribosome"/>
    <property type="evidence" value="ECO:0007669"/>
    <property type="project" value="UniProtKB-KW"/>
</dbReference>
<dbReference type="GO" id="GO:0003735">
    <property type="term" value="F:structural constituent of ribosome"/>
    <property type="evidence" value="ECO:0007669"/>
    <property type="project" value="InterPro"/>
</dbReference>
<dbReference type="GO" id="GO:0006412">
    <property type="term" value="P:translation"/>
    <property type="evidence" value="ECO:0007669"/>
    <property type="project" value="InterPro"/>
</dbReference>
<dbReference type="HAMAP" id="MF_00251">
    <property type="entry name" value="Ribosomal_bL36"/>
    <property type="match status" value="1"/>
</dbReference>
<dbReference type="InterPro" id="IPR000473">
    <property type="entry name" value="Ribosomal_bL36"/>
</dbReference>
<dbReference type="InterPro" id="IPR035977">
    <property type="entry name" value="Ribosomal_bL36_sp"/>
</dbReference>
<dbReference type="NCBIfam" id="TIGR01022">
    <property type="entry name" value="rpmJ_bact"/>
    <property type="match status" value="1"/>
</dbReference>
<dbReference type="PANTHER" id="PTHR42888">
    <property type="entry name" value="50S RIBOSOMAL PROTEIN L36, CHLOROPLASTIC"/>
    <property type="match status" value="1"/>
</dbReference>
<dbReference type="PANTHER" id="PTHR42888:SF1">
    <property type="entry name" value="LARGE RIBOSOMAL SUBUNIT PROTEIN BL36C"/>
    <property type="match status" value="1"/>
</dbReference>
<dbReference type="Pfam" id="PF00444">
    <property type="entry name" value="Ribosomal_L36"/>
    <property type="match status" value="1"/>
</dbReference>
<dbReference type="SUPFAM" id="SSF57840">
    <property type="entry name" value="Ribosomal protein L36"/>
    <property type="match status" value="1"/>
</dbReference>
<dbReference type="PROSITE" id="PS00828">
    <property type="entry name" value="RIBOSOMAL_L36"/>
    <property type="match status" value="1"/>
</dbReference>
<feature type="chain" id="PRO_0000344741" description="Large ribosomal subunit protein bL36c">
    <location>
        <begin position="1"/>
        <end position="37"/>
    </location>
</feature>
<name>RK36_ANEMR</name>
<comment type="subcellular location">
    <subcellularLocation>
        <location>Plastid</location>
    </subcellularLocation>
</comment>
<comment type="similarity">
    <text evidence="1">Belongs to the bacterial ribosomal protein bL36 family.</text>
</comment>
<gene>
    <name evidence="1" type="primary">rpl36</name>
</gene>
<accession>B0YPQ9</accession>
<protein>
    <recommendedName>
        <fullName evidence="2">Large ribosomal subunit protein bL36c</fullName>
    </recommendedName>
    <alternativeName>
        <fullName>Plastid 50S ribosomal protein L36</fullName>
    </alternativeName>
</protein>
<organism>
    <name type="scientific">Aneura mirabilis</name>
    <name type="common">Parasitic liverwort</name>
    <name type="synonym">Cryptothallus mirabilis</name>
    <dbReference type="NCBI Taxonomy" id="280810"/>
    <lineage>
        <taxon>Eukaryota</taxon>
        <taxon>Viridiplantae</taxon>
        <taxon>Streptophyta</taxon>
        <taxon>Embryophyta</taxon>
        <taxon>Marchantiophyta</taxon>
        <taxon>Jungermanniopsida</taxon>
        <taxon>Metzgeriidae</taxon>
        <taxon>Metzgeriales</taxon>
        <taxon>Aneuraceae</taxon>
        <taxon>Aneura</taxon>
    </lineage>
</organism>
<sequence>MKIRASVRKICENCRLIRRRKRVMVVCSNPKHKQKQG</sequence>